<name>DEP5_ALTBR</name>
<accession>D2E9X0</accession>
<protein>
    <recommendedName>
        <fullName evidence="7">Reducing polyketide synthase DEP5</fullName>
        <ecNumber evidence="8">2.3.1.-</ecNumber>
    </recommendedName>
    <alternativeName>
        <fullName evidence="7">Depudecin biosynthesis cluster protein 1</fullName>
    </alternativeName>
</protein>
<keyword id="KW-0012">Acyltransferase</keyword>
<keyword id="KW-0511">Multifunctional enzyme</keyword>
<keyword id="KW-0521">NADP</keyword>
<keyword id="KW-0560">Oxidoreductase</keyword>
<keyword id="KW-0596">Phosphopantetheine</keyword>
<keyword id="KW-0597">Phosphoprotein</keyword>
<keyword id="KW-0808">Transferase</keyword>
<feature type="chain" id="PRO_0000441943" description="Reducing polyketide synthase DEP5">
    <location>
        <begin position="1"/>
        <end position="2376"/>
    </location>
</feature>
<feature type="domain" description="Ketosynthase family 3 (KS3)" evidence="3">
    <location>
        <begin position="47"/>
        <end position="477"/>
    </location>
</feature>
<feature type="domain" description="PKS/mFAS DH" evidence="4">
    <location>
        <begin position="983"/>
        <end position="1286"/>
    </location>
</feature>
<feature type="domain" description="Carrier" evidence="2">
    <location>
        <begin position="2289"/>
        <end position="2368"/>
    </location>
</feature>
<feature type="region of interest" description="Malonyl-CoA:ACP transacylase (MAT) domain" evidence="1">
    <location>
        <begin position="593"/>
        <end position="906"/>
    </location>
</feature>
<feature type="region of interest" description="Dehydratase (DH) domain" evidence="1">
    <location>
        <begin position="983"/>
        <end position="1158"/>
    </location>
</feature>
<feature type="region of interest" description="N-terminal hotdog fold" evidence="4">
    <location>
        <begin position="983"/>
        <end position="1121"/>
    </location>
</feature>
<feature type="region of interest" description="C-terminal hotdog fold" evidence="4">
    <location>
        <begin position="1131"/>
        <end position="1286"/>
    </location>
</feature>
<feature type="region of interest" description="Enoyl reductase (ER) domain" evidence="1">
    <location>
        <begin position="1659"/>
        <end position="1964"/>
    </location>
</feature>
<feature type="region of interest" description="Ketoreductase (KR) domain" evidence="1">
    <location>
        <begin position="1988"/>
        <end position="2163"/>
    </location>
</feature>
<feature type="active site" description="For beta-ketoacyl synthase activity" evidence="3">
    <location>
        <position position="221"/>
    </location>
</feature>
<feature type="active site" description="For beta-ketoacyl synthase activity" evidence="3">
    <location>
        <position position="358"/>
    </location>
</feature>
<feature type="active site" description="For beta-ketoacyl synthase activity" evidence="3">
    <location>
        <position position="399"/>
    </location>
</feature>
<feature type="active site" description="For malonyltransferase activity" evidence="5">
    <location>
        <position position="685"/>
    </location>
</feature>
<feature type="active site" description="Proton acceptor; for dehydratase activity" evidence="4">
    <location>
        <position position="1015"/>
    </location>
</feature>
<feature type="active site" description="Proton donor; for dehydratase activity" evidence="4">
    <location>
        <position position="1195"/>
    </location>
</feature>
<feature type="modified residue" description="O-(pantetheine 4'-phosphoryl)serine" evidence="2">
    <location>
        <position position="2327"/>
    </location>
</feature>
<dbReference type="EC" id="2.3.1.-" evidence="8"/>
<dbReference type="EMBL" id="FJ977165">
    <property type="protein sequence ID" value="ACZ57548.1"/>
    <property type="molecule type" value="Genomic_DNA"/>
</dbReference>
<dbReference type="SMR" id="D2E9X0"/>
<dbReference type="PHI-base" id="PHI:2379"/>
<dbReference type="GO" id="GO:0004315">
    <property type="term" value="F:3-oxoacyl-[acyl-carrier-protein] synthase activity"/>
    <property type="evidence" value="ECO:0007669"/>
    <property type="project" value="InterPro"/>
</dbReference>
<dbReference type="GO" id="GO:0004312">
    <property type="term" value="F:fatty acid synthase activity"/>
    <property type="evidence" value="ECO:0007669"/>
    <property type="project" value="TreeGrafter"/>
</dbReference>
<dbReference type="GO" id="GO:0016491">
    <property type="term" value="F:oxidoreductase activity"/>
    <property type="evidence" value="ECO:0007669"/>
    <property type="project" value="UniProtKB-KW"/>
</dbReference>
<dbReference type="GO" id="GO:0006633">
    <property type="term" value="P:fatty acid biosynthetic process"/>
    <property type="evidence" value="ECO:0007669"/>
    <property type="project" value="InterPro"/>
</dbReference>
<dbReference type="GO" id="GO:0044550">
    <property type="term" value="P:secondary metabolite biosynthetic process"/>
    <property type="evidence" value="ECO:0007669"/>
    <property type="project" value="UniProtKB-ARBA"/>
</dbReference>
<dbReference type="CDD" id="cd05195">
    <property type="entry name" value="enoyl_red"/>
    <property type="match status" value="1"/>
</dbReference>
<dbReference type="CDD" id="cd00833">
    <property type="entry name" value="PKS"/>
    <property type="match status" value="1"/>
</dbReference>
<dbReference type="Gene3D" id="3.40.47.10">
    <property type="match status" value="1"/>
</dbReference>
<dbReference type="Gene3D" id="3.40.366.10">
    <property type="entry name" value="Malonyl-Coenzyme A Acyl Carrier Protein, domain 2"/>
    <property type="match status" value="1"/>
</dbReference>
<dbReference type="Gene3D" id="3.90.180.10">
    <property type="entry name" value="Medium-chain alcohol dehydrogenases, catalytic domain"/>
    <property type="match status" value="1"/>
</dbReference>
<dbReference type="Gene3D" id="3.40.50.720">
    <property type="entry name" value="NAD(P)-binding Rossmann-like Domain"/>
    <property type="match status" value="1"/>
</dbReference>
<dbReference type="Gene3D" id="3.10.129.110">
    <property type="entry name" value="Polyketide synthase dehydratase"/>
    <property type="match status" value="1"/>
</dbReference>
<dbReference type="InterPro" id="IPR001227">
    <property type="entry name" value="Ac_transferase_dom_sf"/>
</dbReference>
<dbReference type="InterPro" id="IPR036736">
    <property type="entry name" value="ACP-like_sf"/>
</dbReference>
<dbReference type="InterPro" id="IPR014043">
    <property type="entry name" value="Acyl_transferase_dom"/>
</dbReference>
<dbReference type="InterPro" id="IPR016035">
    <property type="entry name" value="Acyl_Trfase/lysoPLipase"/>
</dbReference>
<dbReference type="InterPro" id="IPR011032">
    <property type="entry name" value="GroES-like_sf"/>
</dbReference>
<dbReference type="InterPro" id="IPR018201">
    <property type="entry name" value="Ketoacyl_synth_AS"/>
</dbReference>
<dbReference type="InterPro" id="IPR014031">
    <property type="entry name" value="Ketoacyl_synth_C"/>
</dbReference>
<dbReference type="InterPro" id="IPR014030">
    <property type="entry name" value="Ketoacyl_synth_N"/>
</dbReference>
<dbReference type="InterPro" id="IPR016036">
    <property type="entry name" value="Malonyl_transacylase_ACP-bd"/>
</dbReference>
<dbReference type="InterPro" id="IPR036291">
    <property type="entry name" value="NAD(P)-bd_dom_sf"/>
</dbReference>
<dbReference type="InterPro" id="IPR032821">
    <property type="entry name" value="PKS_assoc"/>
</dbReference>
<dbReference type="InterPro" id="IPR020841">
    <property type="entry name" value="PKS_Beta-ketoAc_synthase_dom"/>
</dbReference>
<dbReference type="InterPro" id="IPR042104">
    <property type="entry name" value="PKS_dehydratase_sf"/>
</dbReference>
<dbReference type="InterPro" id="IPR020807">
    <property type="entry name" value="PKS_DH"/>
</dbReference>
<dbReference type="InterPro" id="IPR049551">
    <property type="entry name" value="PKS_DH_C"/>
</dbReference>
<dbReference type="InterPro" id="IPR049552">
    <property type="entry name" value="PKS_DH_N"/>
</dbReference>
<dbReference type="InterPro" id="IPR020843">
    <property type="entry name" value="PKS_ER"/>
</dbReference>
<dbReference type="InterPro" id="IPR013968">
    <property type="entry name" value="PKS_KR"/>
</dbReference>
<dbReference type="InterPro" id="IPR049900">
    <property type="entry name" value="PKS_mFAS_DH"/>
</dbReference>
<dbReference type="InterPro" id="IPR050091">
    <property type="entry name" value="PKS_NRPS_Biosynth_Enz"/>
</dbReference>
<dbReference type="InterPro" id="IPR009081">
    <property type="entry name" value="PP-bd_ACP"/>
</dbReference>
<dbReference type="InterPro" id="IPR006162">
    <property type="entry name" value="Ppantetheine_attach_site"/>
</dbReference>
<dbReference type="InterPro" id="IPR016039">
    <property type="entry name" value="Thiolase-like"/>
</dbReference>
<dbReference type="PANTHER" id="PTHR43775">
    <property type="entry name" value="FATTY ACID SYNTHASE"/>
    <property type="match status" value="1"/>
</dbReference>
<dbReference type="PANTHER" id="PTHR43775:SF50">
    <property type="entry name" value="HIGHLY REDUCING POLYKETIDE SYNTHASE SRDA"/>
    <property type="match status" value="1"/>
</dbReference>
<dbReference type="Pfam" id="PF00698">
    <property type="entry name" value="Acyl_transf_1"/>
    <property type="match status" value="1"/>
</dbReference>
<dbReference type="Pfam" id="PF16197">
    <property type="entry name" value="KAsynt_C_assoc"/>
    <property type="match status" value="1"/>
</dbReference>
<dbReference type="Pfam" id="PF00109">
    <property type="entry name" value="ketoacyl-synt"/>
    <property type="match status" value="1"/>
</dbReference>
<dbReference type="Pfam" id="PF02801">
    <property type="entry name" value="Ketoacyl-synt_C"/>
    <property type="match status" value="1"/>
</dbReference>
<dbReference type="Pfam" id="PF08659">
    <property type="entry name" value="KR"/>
    <property type="match status" value="1"/>
</dbReference>
<dbReference type="Pfam" id="PF21089">
    <property type="entry name" value="PKS_DH_N"/>
    <property type="match status" value="1"/>
</dbReference>
<dbReference type="Pfam" id="PF14765">
    <property type="entry name" value="PS-DH"/>
    <property type="match status" value="1"/>
</dbReference>
<dbReference type="SMART" id="SM00827">
    <property type="entry name" value="PKS_AT"/>
    <property type="match status" value="1"/>
</dbReference>
<dbReference type="SMART" id="SM00826">
    <property type="entry name" value="PKS_DH"/>
    <property type="match status" value="1"/>
</dbReference>
<dbReference type="SMART" id="SM00829">
    <property type="entry name" value="PKS_ER"/>
    <property type="match status" value="1"/>
</dbReference>
<dbReference type="SMART" id="SM00822">
    <property type="entry name" value="PKS_KR"/>
    <property type="match status" value="1"/>
</dbReference>
<dbReference type="SMART" id="SM00825">
    <property type="entry name" value="PKS_KS"/>
    <property type="match status" value="1"/>
</dbReference>
<dbReference type="SUPFAM" id="SSF47336">
    <property type="entry name" value="ACP-like"/>
    <property type="match status" value="1"/>
</dbReference>
<dbReference type="SUPFAM" id="SSF52151">
    <property type="entry name" value="FabD/lysophospholipase-like"/>
    <property type="match status" value="1"/>
</dbReference>
<dbReference type="SUPFAM" id="SSF50129">
    <property type="entry name" value="GroES-like"/>
    <property type="match status" value="1"/>
</dbReference>
<dbReference type="SUPFAM" id="SSF51735">
    <property type="entry name" value="NAD(P)-binding Rossmann-fold domains"/>
    <property type="match status" value="2"/>
</dbReference>
<dbReference type="SUPFAM" id="SSF55048">
    <property type="entry name" value="Probable ACP-binding domain of malonyl-CoA ACP transacylase"/>
    <property type="match status" value="1"/>
</dbReference>
<dbReference type="SUPFAM" id="SSF53901">
    <property type="entry name" value="Thiolase-like"/>
    <property type="match status" value="1"/>
</dbReference>
<dbReference type="PROSITE" id="PS50075">
    <property type="entry name" value="CARRIER"/>
    <property type="match status" value="1"/>
</dbReference>
<dbReference type="PROSITE" id="PS00606">
    <property type="entry name" value="KS3_1"/>
    <property type="match status" value="1"/>
</dbReference>
<dbReference type="PROSITE" id="PS52004">
    <property type="entry name" value="KS3_2"/>
    <property type="match status" value="1"/>
</dbReference>
<dbReference type="PROSITE" id="PS00012">
    <property type="entry name" value="PHOSPHOPANTETHEINE"/>
    <property type="match status" value="1"/>
</dbReference>
<dbReference type="PROSITE" id="PS52019">
    <property type="entry name" value="PKS_MFAS_DH"/>
    <property type="match status" value="1"/>
</dbReference>
<sequence>MPIFYESSSDASDAAPEFDLRNACQRIVTDDEYVVSSSTEPPLSQQLEPIAVVGMGCRLPGDVSSPSDFWRLMMEKRSGQTPKVPSSRFNIDAHFHPDNDRPGSFHVYGGYFINETLQEFDPAFFGITPVEATWMDPQQRKLLEVVYEAFESAGLTLDQLSGSDTACFMATFTADFQQMSFKEPSFRHSLAATGVDPGLLSNRVSHVFNLRGPSIVVNTACSSSVYALHNACNALRNHECSAAVVGGSNLILTVDQHMNTAKLGVLSPTSTCHTFNSYANGYGRAEGVGAIYLKRLSDAVKDGDPIRGVIRSSATNNNGRAPAVGITYPGFDGQRNVMMHAYQRSGLDPMLTGYFECHGTGTAIGDPLEVHAVSDVMNANRTEADGPLQMGAVKTNIGHSEAASGLSAVIKAILIAERNIIPPTRGLTDPNPKIDWKGWQINVPTESMTIPKHLPITRISVNSFGYGGTNAHTIIESPNSLLAFPQSYQYSMPGTTTKSKLARGAVKRNRPYLLVFSAHEIGALKRNATAYGRVAANYSLLDLSYTLANHRTRFHSKGMVVTTPASLHEDIVNGSPNLVLAHKKETATTLGFVFTGQGAQWARMGAQLMAYYPTFLTSIRRMDLALEDLNDAPSWTLEEVILQDSATSCVGEAEFSQPLCTAIQVALVQLFRLWGIQPSVTIGHSSGEIGAAFAAGYISEAEAIWIAYYRGQVVKNIDSVGAMMAVGLGAEAVAPYVESYEPEVVIACHNSPSGVTLSGSVEILKSIEGTLQAEGIFARLVKTNGKAYHSRHMLPAVERYESLIGKARQATTQKHVSSKTKMVSSVTNSVLADDAVLDEKYWSANLVSPVLFNQAVQTALKCKEVPEVDILIEIGPHSALSGPLRQIKTYLHADKLQYLPTLVRGFPCANQVLKLAGELFLRNYPLDLARVTAIEEVYPSGKIIPRMGNLIVDLPPYQWDKTKRYWAESRESKEQRSPRFPRHDVLGQLTTGASLAEPTWRNILRIKDLPWLRDHSLGGEAVFPAAGYLSMAMEAVTQINEMTEKPCKITSYVFRDIVIQQALVTPDDDNGIEVLLNMHPSRINTDDSGKQWWDFNVSSVSIEGHRKNHMAGSIAIRTSARSGLARKVPNLPQRASGRLWNHALKKVGFNYGPTFQDMDNITFDGSTYCAHASTNVKTAVMNDESRHVLHPAIVDSCLQLMIVAIWAGRASAMQFGAVPVRAEEIVIWKPKATHLTEGARATMFSWIDPRGQRLFNAHSQLVAEDRTVLMEIKNMRCIAYEAAIPQKLEAPIQPRPYSQLVYKPDVLWVHNTQTHLDVATFVELAEFKTPGLRVLVTDLMVAQSLIAKFPGIPMTLANRDVKEAEAEADPSGVKKFSLMSLDLTASLATQSYEKLKNSFDVVIAPNILSNSLECIAELLVEGGQAVLGVNGSTIVHDLEKAGLSGPVFSMKDTMFVTSKVRESDKPVSILVQLIYRHNPTEDITRLRLHLEETGFRSRISKLGDPCPPGSNVIMLADLEDPLVATMSEPEFQHLQTLLSDSANVLWVSCGDYLGAGIDPEAAMTLGLLRTLRSERASLKATFVDFVRTDLASEEFLSRTTSLAIALFDDEKKLETEYIARDGQLLLSRLIPAEEVNKTHGKIGRETKPQPFDPKAELVGRIQAGKVVFETALLDKPPLQQDEIEFRQLATGFNLEDQAAITGASFETDFSHETTGIVTKIGSAITKVSVGDKIVAFSASRFSTYQRVAECLVQVLGPEEPYTTIAGLPMYYGAALYGLETLARLQYQESVFILPGSGLLGAAAIWIARALHCLPYVVVRDSAEAEHVATTFSLPSAQILTEYRPEQLVDLDIDVVFSGSSVEPAVAREAWRHTPAFSRFVNCTAAASTSPLDSIPASRGASYLSVNFPRLFQKPRVLGTLLERIMVLYRQGSIPAPSITVRNITELNESIHSFVDSICDNKIVIAHQTSEGLVDIVESRPRLSLPPDATYLLVGCLGGLGRSLTSWMMKHGARNFAFLSRSGMDSEQAAILVNNLETRGANVQVFRGDATVKEDVEEAVRSIPADRPLRGVVHAAMVLRDGLFQNMAYENWTTSIRPKVLGSKHLTEVVADLNLDFFLMMSSVSGILGTPGQANYAAGNSYMDALARLRRSQGKPACAVVLPMILGVGVVAQNDGLEDSLKRKGMYGIDEEALLDSFEAAIIEQRPQTCQQNEALDHLIVGLDPAGLHKARQEAEGDVDAFWSADPRFSSLVHSMNVYGGGNQGGDGEAGSILTRLRAAGTESPAKAVDLVRDHFIAKLARILLVDEAEFGGDDNAERSIASYGVDSMIGAELRNWIFKDLGLDIAFQQLLSPSLTISKFSELVCGAQGIVVEQKV</sequence>
<comment type="function">
    <text evidence="6">Reducing polyketide synthase; part of the gene cluster that mediates the biosynthesis of depudecin, a highly oxidized eleven-carbon linear polyketide that acts as a histone deacetylase (HDAC) inhibitor and makes a small contribution to pathogenesis (PubMed:19737099). The reducing polyketide synthase DEP5 is the central enzyme in depudecin biosynthesis by yielding the backbone polyketide chain (PubMed:19737099). The monooxygenases DEP2 and DEP4, as well as the uncharacterized protein DEP1, then act as tailoring enzymes to modify the intermediate polyketide chain into depudecin (PubMed:19737099).</text>
</comment>
<comment type="pathway">
    <text evidence="6">Polyketide biosynthesis.</text>
</comment>
<comment type="induction">
    <text evidence="6">Expression is positively regulated by the depudecin biosynthesis cluster-specific transcription activator DEP6 (PubMed:19737099).</text>
</comment>
<comment type="disruption phenotype">
    <text evidence="6">Impairs the production of depudecin (PubMed:19737099). Leads to a small but statistically significant reduction of approximately 10% in lesion size on Brassica oleracea (green cabbage) leaves (PubMed:19737099).</text>
</comment>
<gene>
    <name evidence="7" type="primary">DEP5</name>
    <name evidence="7" type="synonym">PKS9</name>
</gene>
<reference key="1">
    <citation type="journal article" date="2009" name="Mol. Plant Microbe Interact.">
        <title>Biosynthesis and role in virulence of the histone deacetylase inhibitor depudecin from Alternaria brassicicola.</title>
        <authorList>
            <person name="Wight W.D."/>
            <person name="Kim K.-H."/>
            <person name="Lawrence C.B."/>
            <person name="Walton J.D."/>
        </authorList>
    </citation>
    <scope>NUCLEOTIDE SEQUENCE [GENOMIC DNA]</scope>
    <scope>DISRUPTION PHENOTYPE</scope>
    <scope>FUNCTION</scope>
    <scope>INDUCTION</scope>
    <scope>PATHWAY</scope>
    <source>
        <strain>MUCL 202097</strain>
    </source>
</reference>
<evidence type="ECO:0000255" key="1"/>
<evidence type="ECO:0000255" key="2">
    <source>
        <dbReference type="PROSITE-ProRule" id="PRU00258"/>
    </source>
</evidence>
<evidence type="ECO:0000255" key="3">
    <source>
        <dbReference type="PROSITE-ProRule" id="PRU01348"/>
    </source>
</evidence>
<evidence type="ECO:0000255" key="4">
    <source>
        <dbReference type="PROSITE-ProRule" id="PRU01363"/>
    </source>
</evidence>
<evidence type="ECO:0000255" key="5">
    <source>
        <dbReference type="PROSITE-ProRule" id="PRU10022"/>
    </source>
</evidence>
<evidence type="ECO:0000269" key="6">
    <source>
    </source>
</evidence>
<evidence type="ECO:0000303" key="7">
    <source>
    </source>
</evidence>
<evidence type="ECO:0000305" key="8">
    <source>
    </source>
</evidence>
<organism>
    <name type="scientific">Alternaria brassicicola</name>
    <name type="common">Dark leaf spot agent</name>
    <dbReference type="NCBI Taxonomy" id="29001"/>
    <lineage>
        <taxon>Eukaryota</taxon>
        <taxon>Fungi</taxon>
        <taxon>Dikarya</taxon>
        <taxon>Ascomycota</taxon>
        <taxon>Pezizomycotina</taxon>
        <taxon>Dothideomycetes</taxon>
        <taxon>Pleosporomycetidae</taxon>
        <taxon>Pleosporales</taxon>
        <taxon>Pleosporineae</taxon>
        <taxon>Pleosporaceae</taxon>
        <taxon>Alternaria</taxon>
        <taxon>Alternaria sect. Brassicicola</taxon>
    </lineage>
</organism>
<proteinExistence type="evidence at transcript level"/>